<sequence length="276" mass="30927">MLKRRLLLLWALSLLASLVYSAPRPANQRVGIVGGHEASESKWPWQVSLRFKLNYWIHFCGGSLIHPQWVLTAAHCVGPHIKSPQLFRVQLREQYLYYGDQLLSLNRIVVHPHYYTAEGGADVALLELEVPVNVSTHIHPISLPPASETFPPGTSCWVTGWGDIDNDEPLPPPYPLKQVKVPIVENSLCDRKYHTGLYTGDDFPIVHDGMLCAGNTRRDSCQGDSGGPLVCKVKGTWLQAGVVSWGEGCAQPNKPGIYTRVTYYLDWIHRYVPEHS</sequence>
<dbReference type="EC" id="3.4.21.59"/>
<dbReference type="EMBL" id="M57626">
    <property type="protein sequence ID" value="AAA39988.1"/>
    <property type="molecule type" value="mRNA"/>
</dbReference>
<dbReference type="EMBL" id="M57625">
    <property type="protein sequence ID" value="AAA39987.1"/>
    <property type="molecule type" value="mRNA"/>
</dbReference>
<dbReference type="EMBL" id="L31853">
    <property type="protein sequence ID" value="AAA39725.1"/>
    <property type="molecule type" value="mRNA"/>
</dbReference>
<dbReference type="EMBL" id="X78542">
    <property type="protein sequence ID" value="CAA55288.1"/>
    <property type="molecule type" value="mRNA"/>
</dbReference>
<dbReference type="EMBL" id="BC024374">
    <property type="protein sequence ID" value="AAH24374.1"/>
    <property type="molecule type" value="mRNA"/>
</dbReference>
<dbReference type="CCDS" id="CCDS28517.1">
    <molecule id="P21845-1"/>
</dbReference>
<dbReference type="PIR" id="A38654">
    <property type="entry name" value="A38654"/>
</dbReference>
<dbReference type="PIR" id="I48685">
    <property type="entry name" value="I48685"/>
</dbReference>
<dbReference type="SMR" id="P21845"/>
<dbReference type="ComplexPortal" id="CPX-3806">
    <property type="entry name" value="Tryptase beta-2 complex"/>
</dbReference>
<dbReference type="FunCoup" id="P21845">
    <property type="interactions" value="81"/>
</dbReference>
<dbReference type="STRING" id="10090.ENSMUSP00000157286"/>
<dbReference type="BindingDB" id="P21845"/>
<dbReference type="ChEMBL" id="CHEMBL4523201"/>
<dbReference type="MEROPS" id="S01.025"/>
<dbReference type="GlyCosmos" id="P21845">
    <property type="glycosylation" value="1 site, No reported glycans"/>
</dbReference>
<dbReference type="GlyGen" id="P21845">
    <property type="glycosylation" value="1 site"/>
</dbReference>
<dbReference type="iPTMnet" id="P21845"/>
<dbReference type="PhosphoSitePlus" id="P21845"/>
<dbReference type="PaxDb" id="10090-ENSMUSP00000063499"/>
<dbReference type="ProteomicsDB" id="298244">
    <molecule id="P21845-1"/>
</dbReference>
<dbReference type="ProteomicsDB" id="298245">
    <molecule id="P21845-2"/>
</dbReference>
<dbReference type="AGR" id="MGI:96942"/>
<dbReference type="MGI" id="MGI:96942">
    <property type="gene designation" value="Tpsb2"/>
</dbReference>
<dbReference type="eggNOG" id="KOG3627">
    <property type="taxonomic scope" value="Eukaryota"/>
</dbReference>
<dbReference type="InParanoid" id="P21845"/>
<dbReference type="OrthoDB" id="10002959at2759"/>
<dbReference type="PhylomeDB" id="P21845"/>
<dbReference type="Reactome" id="R-MMU-1592389">
    <property type="pathway name" value="Activation of Matrix Metalloproteinases"/>
</dbReference>
<dbReference type="ChiTaRS" id="Tpsb2">
    <property type="organism name" value="mouse"/>
</dbReference>
<dbReference type="PRO" id="PR:P21845"/>
<dbReference type="Proteomes" id="UP000000589">
    <property type="component" value="Unplaced"/>
</dbReference>
<dbReference type="RNAct" id="P21845">
    <property type="molecule type" value="protein"/>
</dbReference>
<dbReference type="GO" id="GO:0005576">
    <property type="term" value="C:extracellular region"/>
    <property type="evidence" value="ECO:0000304"/>
    <property type="project" value="MGI"/>
</dbReference>
<dbReference type="GO" id="GO:0008201">
    <property type="term" value="F:heparin binding"/>
    <property type="evidence" value="ECO:0000314"/>
    <property type="project" value="MGI"/>
</dbReference>
<dbReference type="GO" id="GO:0008233">
    <property type="term" value="F:peptidase activity"/>
    <property type="evidence" value="ECO:0000314"/>
    <property type="project" value="MGI"/>
</dbReference>
<dbReference type="GO" id="GO:0004252">
    <property type="term" value="F:serine-type endopeptidase activity"/>
    <property type="evidence" value="ECO:0007669"/>
    <property type="project" value="UniProtKB-EC"/>
</dbReference>
<dbReference type="GO" id="GO:0006954">
    <property type="term" value="P:inflammatory response"/>
    <property type="evidence" value="ECO:0000304"/>
    <property type="project" value="MGI"/>
</dbReference>
<dbReference type="GO" id="GO:0006508">
    <property type="term" value="P:proteolysis"/>
    <property type="evidence" value="ECO:0007669"/>
    <property type="project" value="UniProtKB-KW"/>
</dbReference>
<dbReference type="CDD" id="cd00190">
    <property type="entry name" value="Tryp_SPc"/>
    <property type="match status" value="1"/>
</dbReference>
<dbReference type="FunFam" id="2.40.10.10:FF:000039">
    <property type="entry name" value="Brain-specific serine protease 4"/>
    <property type="match status" value="1"/>
</dbReference>
<dbReference type="Gene3D" id="2.40.10.10">
    <property type="entry name" value="Trypsin-like serine proteases"/>
    <property type="match status" value="2"/>
</dbReference>
<dbReference type="InterPro" id="IPR009003">
    <property type="entry name" value="Peptidase_S1_PA"/>
</dbReference>
<dbReference type="InterPro" id="IPR043504">
    <property type="entry name" value="Peptidase_S1_PA_chymotrypsin"/>
</dbReference>
<dbReference type="InterPro" id="IPR001314">
    <property type="entry name" value="Peptidase_S1A"/>
</dbReference>
<dbReference type="InterPro" id="IPR001254">
    <property type="entry name" value="Trypsin_dom"/>
</dbReference>
<dbReference type="InterPro" id="IPR018114">
    <property type="entry name" value="TRYPSIN_HIS"/>
</dbReference>
<dbReference type="InterPro" id="IPR033116">
    <property type="entry name" value="TRYPSIN_SER"/>
</dbReference>
<dbReference type="PANTHER" id="PTHR24253:SF144">
    <property type="entry name" value="CHYMOTRYPSIN-LIKE PROTEASE CTRL-1-RELATED"/>
    <property type="match status" value="1"/>
</dbReference>
<dbReference type="PANTHER" id="PTHR24253">
    <property type="entry name" value="TRANSMEMBRANE PROTEASE SERINE"/>
    <property type="match status" value="1"/>
</dbReference>
<dbReference type="Pfam" id="PF00089">
    <property type="entry name" value="Trypsin"/>
    <property type="match status" value="1"/>
</dbReference>
<dbReference type="PRINTS" id="PR00722">
    <property type="entry name" value="CHYMOTRYPSIN"/>
</dbReference>
<dbReference type="SMART" id="SM00020">
    <property type="entry name" value="Tryp_SPc"/>
    <property type="match status" value="1"/>
</dbReference>
<dbReference type="SUPFAM" id="SSF50494">
    <property type="entry name" value="Trypsin-like serine proteases"/>
    <property type="match status" value="1"/>
</dbReference>
<dbReference type="PROSITE" id="PS50240">
    <property type="entry name" value="TRYPSIN_DOM"/>
    <property type="match status" value="1"/>
</dbReference>
<dbReference type="PROSITE" id="PS00134">
    <property type="entry name" value="TRYPSIN_HIS"/>
    <property type="match status" value="1"/>
</dbReference>
<dbReference type="PROSITE" id="PS00135">
    <property type="entry name" value="TRYPSIN_SER"/>
    <property type="match status" value="1"/>
</dbReference>
<comment type="function">
    <text evidence="5">Tryptase is the major neutral protease present in mast cells and is secreted upon the coupled activation-degranulation response of this cell type. Plays a role in innate immunity.</text>
</comment>
<comment type="catalytic activity">
    <reaction>
        <text>Preferential cleavage: Arg-|-Xaa, Lys-|-Xaa, but with more restricted specificity than trypsin.</text>
        <dbReference type="EC" id="3.4.21.59"/>
    </reaction>
</comment>
<comment type="subunit">
    <text evidence="1">Homotetramer. The active tetramer is converted to inactive monomers at neutral and acidic pH in the absence of heparin. Low concentrations of inactive monomers become active monomers at pH 6.0 in the presence of heparin. When the concentration of active monomers is higher, they convert to active monomers and then to active tetramers. These monomers are active and functionally distinct from the tetrameric enzyme. In contrast to the hidden active sites in the tetrameric form, the active site of the monomeric form is accessible for macromolecular proteins and inhibitors, e.g. fibrinogen which is a substrate for the monomeric but not for the tetrameric form. The monomeric form forms a complex with SERPINB6 (By similarity).</text>
</comment>
<comment type="subcellular location">
    <subcellularLocation>
        <location evidence="1">Secreted</location>
    </subcellularLocation>
    <text evidence="1">Released from the secretory granules upon mast cell activation.</text>
</comment>
<comment type="alternative products">
    <event type="alternative splicing"/>
    <isoform>
        <id>P21845-1</id>
        <name>Long</name>
        <sequence type="displayed"/>
    </isoform>
    <isoform>
        <id>P21845-2</id>
        <name>Short</name>
        <sequence type="described" ref="VSP_005376 VSP_005377"/>
    </isoform>
</comment>
<comment type="tissue specificity">
    <text evidence="4">During embryogenesis, detected primarily in skin.</text>
</comment>
<comment type="developmental stage">
    <text evidence="4">Not detected at early embryonic stages but is abundantly expressed in later stages with a peak at 17.5 dpc-18.5 dpc.</text>
</comment>
<comment type="disruption phenotype">
    <text evidence="5">Mutant mice do not exhibit any visible phenotype when maintained in pathogen-free facilities. However, after peritoneal inoculation of Klebsiella pneumoniae, they cannot efficiently fight the infection and show increased lethality.</text>
</comment>
<comment type="miscellaneous">
    <molecule>Isoform Short</molecule>
    <text evidence="8">Probably non functional.</text>
</comment>
<comment type="similarity">
    <text evidence="3">Belongs to the peptidase S1 family. Tryptase subfamily.</text>
</comment>
<evidence type="ECO:0000250" key="1"/>
<evidence type="ECO:0000255" key="2"/>
<evidence type="ECO:0000255" key="3">
    <source>
        <dbReference type="PROSITE-ProRule" id="PRU00274"/>
    </source>
</evidence>
<evidence type="ECO:0000269" key="4">
    <source>
    </source>
</evidence>
<evidence type="ECO:0000269" key="5">
    <source>
    </source>
</evidence>
<evidence type="ECO:0000269" key="6">
    <source>
    </source>
</evidence>
<evidence type="ECO:0000303" key="7">
    <source>
    </source>
</evidence>
<evidence type="ECO:0000305" key="8"/>
<evidence type="ECO:0007744" key="9">
    <source>
    </source>
</evidence>
<gene>
    <name type="primary">Tpsb2</name>
    <name type="synonym">Mcpt6</name>
</gene>
<reference key="1">
    <citation type="journal article" date="1991" name="J. Biol. Chem.">
        <title>Cloning of the cDNA and gene of mouse mast cell protease-6. Transcription by progenitor mast cells and mast cells of the connective tissue subclass.</title>
        <authorList>
            <person name="Reynolds D.S."/>
            <person name="Gurley D.S."/>
            <person name="Austen K.F."/>
            <person name="Serafin W.E."/>
        </authorList>
    </citation>
    <scope>NUCLEOTIDE SEQUENCE [MRNA]</scope>
</reference>
<reference key="2">
    <citation type="journal article" date="1993" name="Scand. J. Immunol.">
        <title>Expression of a mast cell tryptase in the human monocytic cell lines U-937 and Mono Mac 6.</title>
        <authorList>
            <person name="Huang R."/>
            <person name="Abrink M."/>
            <person name="Gobl A.E."/>
            <person name="Nilsson G."/>
            <person name="Aveskogh M."/>
            <person name="Larsson L.G."/>
            <person name="Nilsson K."/>
            <person name="Hellman L."/>
        </authorList>
    </citation>
    <scope>NUCLEOTIDE SEQUENCE [MRNA]</scope>
    <source>
        <strain>Leaden X A1</strain>
    </source>
</reference>
<reference key="3">
    <citation type="journal article" date="1994" name="Immunogenetics">
        <title>Genes for mast-cell serine protease and their molecular evolution.</title>
        <authorList>
            <person name="Huang R."/>
            <person name="Hellman L.T."/>
        </authorList>
    </citation>
    <scope>NUCLEOTIDE SEQUENCE [MRNA] (ISOFORM SHORT)</scope>
    <source>
        <strain>Leaden X A1</strain>
    </source>
</reference>
<reference key="4">
    <citation type="journal article" date="2004" name="Genome Res.">
        <title>The status, quality, and expansion of the NIH full-length cDNA project: the Mammalian Gene Collection (MGC).</title>
        <authorList>
            <consortium name="The MGC Project Team"/>
        </authorList>
    </citation>
    <scope>NUCLEOTIDE SEQUENCE [LARGE SCALE MRNA] (ISOFORM LONG)</scope>
    <source>
        <strain>FVB/N</strain>
        <tissue>Colon</tissue>
    </source>
</reference>
<reference key="5">
    <citation type="journal article" date="1990" name="Proc. Natl. Acad. Sci. U.S.A.">
        <title>Different mouse mast cell populations express various combinations of at least six distinct mast cell serine proteases.</title>
        <authorList>
            <person name="Reynolds D.S."/>
            <person name="Stevens R.L."/>
            <person name="Lane W.S."/>
            <person name="Carr M.H."/>
            <person name="Austen K.F."/>
            <person name="Serafin W.E."/>
        </authorList>
    </citation>
    <scope>PROTEIN SEQUENCE OF 32-54</scope>
</reference>
<reference key="6">
    <citation type="journal article" date="2007" name="J. Biol. Chem.">
        <title>The mast cell-restricted tryptase mMCP-6 has a critical immunoprotective role in bacterial infections.</title>
        <authorList>
            <person name="Thakurdas S.M."/>
            <person name="Melicoff E."/>
            <person name="Sansores-Garcia L."/>
            <person name="Moreira D.C."/>
            <person name="Petrova Y."/>
            <person name="Stevens R.L."/>
            <person name="Adachi R."/>
        </authorList>
    </citation>
    <scope>FUNCTION</scope>
    <scope>DISRUPTION PHENOTYPE</scope>
</reference>
<reference key="7">
    <citation type="journal article" date="2007" name="J. Immunol.">
        <title>Quantitative time-resolved phosphoproteomic analysis of mast cell signaling.</title>
        <authorList>
            <person name="Cao L."/>
            <person name="Yu K."/>
            <person name="Banh C."/>
            <person name="Nguyen V."/>
            <person name="Ritz A."/>
            <person name="Raphael B.J."/>
            <person name="Kawakami Y."/>
            <person name="Kawakami T."/>
            <person name="Salomon A.R."/>
        </authorList>
    </citation>
    <scope>PHOSPHORYLATION [LARGE SCALE ANALYSIS] AT TYR-98</scope>
    <scope>IDENTIFICATION BY MASS SPECTROMETRY [LARGE SCALE ANALYSIS]</scope>
    <source>
        <tissue>Mast cell</tissue>
    </source>
</reference>
<reference key="8">
    <citation type="journal article" date="2007" name="Mol. Immunol.">
        <title>The expression pattern of three mast cell specific proteases during mouse development.</title>
        <authorList>
            <person name="Abraham D."/>
            <person name="Oster H."/>
            <person name="Huber M."/>
            <person name="Leitges M."/>
        </authorList>
    </citation>
    <scope>TISSUE SPECIFICITY</scope>
    <scope>DEVELOPMENTAL STAGE</scope>
</reference>
<accession>P21845</accession>
<accession>Q61962</accession>
<name>TRYB2_MOUSE</name>
<proteinExistence type="evidence at protein level"/>
<protein>
    <recommendedName>
        <fullName>Tryptase beta-2</fullName>
        <shortName>Tryptase-2</shortName>
        <ecNumber>3.4.21.59</ecNumber>
    </recommendedName>
    <alternativeName>
        <fullName>Mast cell protease 6</fullName>
        <shortName>mMCP-6</shortName>
    </alternativeName>
</protein>
<keyword id="KW-0025">Alternative splicing</keyword>
<keyword id="KW-0903">Direct protein sequencing</keyword>
<keyword id="KW-1015">Disulfide bond</keyword>
<keyword id="KW-0325">Glycoprotein</keyword>
<keyword id="KW-0378">Hydrolase</keyword>
<keyword id="KW-0597">Phosphoprotein</keyword>
<keyword id="KW-0645">Protease</keyword>
<keyword id="KW-1185">Reference proteome</keyword>
<keyword id="KW-0964">Secreted</keyword>
<keyword id="KW-0720">Serine protease</keyword>
<keyword id="KW-0732">Signal</keyword>
<keyword id="KW-0865">Zymogen</keyword>
<feature type="signal peptide">
    <location>
        <begin position="1"/>
        <end position="21"/>
    </location>
</feature>
<feature type="propeptide" id="PRO_0000027490" description="Activation peptide" evidence="6">
    <location>
        <begin position="22"/>
        <end position="31"/>
    </location>
</feature>
<feature type="chain" id="PRO_0000027491" description="Tryptase beta-2">
    <location>
        <begin position="32"/>
        <end position="276"/>
    </location>
</feature>
<feature type="domain" description="Peptidase S1" evidence="3">
    <location>
        <begin position="32"/>
        <end position="273"/>
    </location>
</feature>
<feature type="active site" description="Charge relay system" evidence="1">
    <location>
        <position position="75"/>
    </location>
</feature>
<feature type="active site" description="Charge relay system" evidence="1">
    <location>
        <position position="122"/>
    </location>
</feature>
<feature type="active site" description="Charge relay system" evidence="1">
    <location>
        <position position="225"/>
    </location>
</feature>
<feature type="modified residue" description="Phosphotyrosine" evidence="9">
    <location>
        <position position="98"/>
    </location>
</feature>
<feature type="glycosylation site" description="N-linked (GlcNAc...) asparagine" evidence="2">
    <location>
        <position position="133"/>
    </location>
</feature>
<feature type="disulfide bond" evidence="3">
    <location>
        <begin position="60"/>
        <end position="76"/>
    </location>
</feature>
<feature type="disulfide bond" evidence="3">
    <location>
        <begin position="156"/>
        <end position="231"/>
    </location>
</feature>
<feature type="disulfide bond" evidence="3">
    <location>
        <begin position="189"/>
        <end position="212"/>
    </location>
</feature>
<feature type="disulfide bond" evidence="3">
    <location>
        <begin position="221"/>
        <end position="249"/>
    </location>
</feature>
<feature type="splice variant" id="VSP_005376" description="In isoform Short." evidence="7">
    <original>GDSGGPLV</original>
    <variation>PFCIGDDI</variation>
    <location>
        <begin position="223"/>
        <end position="230"/>
    </location>
</feature>
<feature type="splice variant" id="VSP_005377" description="In isoform Short." evidence="7">
    <location>
        <begin position="231"/>
        <end position="276"/>
    </location>
</feature>
<organism>
    <name type="scientific">Mus musculus</name>
    <name type="common">Mouse</name>
    <dbReference type="NCBI Taxonomy" id="10090"/>
    <lineage>
        <taxon>Eukaryota</taxon>
        <taxon>Metazoa</taxon>
        <taxon>Chordata</taxon>
        <taxon>Craniata</taxon>
        <taxon>Vertebrata</taxon>
        <taxon>Euteleostomi</taxon>
        <taxon>Mammalia</taxon>
        <taxon>Eutheria</taxon>
        <taxon>Euarchontoglires</taxon>
        <taxon>Glires</taxon>
        <taxon>Rodentia</taxon>
        <taxon>Myomorpha</taxon>
        <taxon>Muroidea</taxon>
        <taxon>Muridae</taxon>
        <taxon>Murinae</taxon>
        <taxon>Mus</taxon>
        <taxon>Mus</taxon>
    </lineage>
</organism>